<feature type="chain" id="PRO_0000409456" description="Protein MOR1">
    <location>
        <begin position="1"/>
        <end position="1997"/>
    </location>
</feature>
<feature type="repeat" description="HEAT 1">
    <location>
        <begin position="48"/>
        <end position="86"/>
    </location>
</feature>
<feature type="repeat" description="HEAT 2">
    <location>
        <begin position="164"/>
        <end position="202"/>
    </location>
</feature>
<feature type="repeat" description="HEAT 3">
    <location>
        <begin position="321"/>
        <end position="359"/>
    </location>
</feature>
<feature type="repeat" description="HEAT 4">
    <location>
        <begin position="362"/>
        <end position="400"/>
    </location>
</feature>
<feature type="repeat" description="HEAT 5">
    <location>
        <begin position="441"/>
        <end position="479"/>
    </location>
</feature>
<feature type="repeat" description="HEAT 6">
    <location>
        <begin position="848"/>
        <end position="886"/>
    </location>
</feature>
<feature type="repeat" description="HEAT 7">
    <location>
        <begin position="890"/>
        <end position="928"/>
    </location>
</feature>
<feature type="repeat" description="HEAT 8">
    <location>
        <begin position="931"/>
        <end position="969"/>
    </location>
</feature>
<feature type="repeat" description="HEAT 9">
    <location>
        <begin position="1007"/>
        <end position="1045"/>
    </location>
</feature>
<feature type="repeat" description="HEAT 10">
    <location>
        <begin position="1233"/>
        <end position="1259"/>
    </location>
</feature>
<feature type="repeat" description="HEAT 11">
    <location>
        <begin position="1260"/>
        <end position="1294"/>
    </location>
</feature>
<feature type="repeat" description="HEAT 12">
    <location>
        <begin position="1295"/>
        <end position="1332"/>
    </location>
</feature>
<feature type="repeat" description="HEAT 13">
    <location>
        <begin position="1334"/>
        <end position="1372"/>
    </location>
</feature>
<feature type="repeat" description="HEAT 14">
    <location>
        <begin position="1539"/>
        <end position="1579"/>
    </location>
</feature>
<feature type="region of interest" description="Disordered" evidence="3">
    <location>
        <begin position="236"/>
        <end position="264"/>
    </location>
</feature>
<feature type="region of interest" description="Disordered" evidence="3">
    <location>
        <begin position="501"/>
        <end position="576"/>
    </location>
</feature>
<feature type="region of interest" description="Disordered" evidence="3">
    <location>
        <begin position="1087"/>
        <end position="1115"/>
    </location>
</feature>
<feature type="region of interest" description="Disordered" evidence="3">
    <location>
        <begin position="1400"/>
        <end position="1436"/>
    </location>
</feature>
<feature type="region of interest" description="Disordered" evidence="3">
    <location>
        <begin position="1755"/>
        <end position="1776"/>
    </location>
</feature>
<feature type="compositionally biased region" description="Polar residues" evidence="3">
    <location>
        <begin position="504"/>
        <end position="520"/>
    </location>
</feature>
<feature type="compositionally biased region" description="Low complexity" evidence="3">
    <location>
        <begin position="529"/>
        <end position="539"/>
    </location>
</feature>
<feature type="compositionally biased region" description="Basic and acidic residues" evidence="3">
    <location>
        <begin position="1400"/>
        <end position="1410"/>
    </location>
</feature>
<feature type="compositionally biased region" description="Polar residues" evidence="3">
    <location>
        <begin position="1764"/>
        <end position="1776"/>
    </location>
</feature>
<evidence type="ECO:0000250" key="1"/>
<evidence type="ECO:0000250" key="2">
    <source>
        <dbReference type="UniProtKB" id="Q94FN2"/>
    </source>
</evidence>
<evidence type="ECO:0000256" key="3">
    <source>
        <dbReference type="SAM" id="MobiDB-lite"/>
    </source>
</evidence>
<evidence type="ECO:0000305" key="4"/>
<name>MOR1_ORYSJ</name>
<reference key="1">
    <citation type="journal article" date="2002" name="Nature">
        <title>The genome sequence and structure of rice chromosome 1.</title>
        <authorList>
            <person name="Sasaki T."/>
            <person name="Matsumoto T."/>
            <person name="Yamamoto K."/>
            <person name="Sakata K."/>
            <person name="Baba T."/>
            <person name="Katayose Y."/>
            <person name="Wu J."/>
            <person name="Niimura Y."/>
            <person name="Cheng Z."/>
            <person name="Nagamura Y."/>
            <person name="Antonio B.A."/>
            <person name="Kanamori H."/>
            <person name="Hosokawa S."/>
            <person name="Masukawa M."/>
            <person name="Arikawa K."/>
            <person name="Chiden Y."/>
            <person name="Hayashi M."/>
            <person name="Okamoto M."/>
            <person name="Ando T."/>
            <person name="Aoki H."/>
            <person name="Arita K."/>
            <person name="Hamada M."/>
            <person name="Harada C."/>
            <person name="Hijishita S."/>
            <person name="Honda M."/>
            <person name="Ichikawa Y."/>
            <person name="Idonuma A."/>
            <person name="Iijima M."/>
            <person name="Ikeda M."/>
            <person name="Ikeno M."/>
            <person name="Ito S."/>
            <person name="Ito T."/>
            <person name="Ito Y."/>
            <person name="Ito Y."/>
            <person name="Iwabuchi A."/>
            <person name="Kamiya K."/>
            <person name="Karasawa W."/>
            <person name="Katagiri S."/>
            <person name="Kikuta A."/>
            <person name="Kobayashi N."/>
            <person name="Kono I."/>
            <person name="Machita K."/>
            <person name="Maehara T."/>
            <person name="Mizuno H."/>
            <person name="Mizubayashi T."/>
            <person name="Mukai Y."/>
            <person name="Nagasaki H."/>
            <person name="Nakashima M."/>
            <person name="Nakama Y."/>
            <person name="Nakamichi Y."/>
            <person name="Nakamura M."/>
            <person name="Namiki N."/>
            <person name="Negishi M."/>
            <person name="Ohta I."/>
            <person name="Ono N."/>
            <person name="Saji S."/>
            <person name="Sakai K."/>
            <person name="Shibata M."/>
            <person name="Shimokawa T."/>
            <person name="Shomura A."/>
            <person name="Song J."/>
            <person name="Takazaki Y."/>
            <person name="Terasawa K."/>
            <person name="Tsuji K."/>
            <person name="Waki K."/>
            <person name="Yamagata H."/>
            <person name="Yamane H."/>
            <person name="Yoshiki S."/>
            <person name="Yoshihara R."/>
            <person name="Yukawa K."/>
            <person name="Zhong H."/>
            <person name="Iwama H."/>
            <person name="Endo T."/>
            <person name="Ito H."/>
            <person name="Hahn J.H."/>
            <person name="Kim H.-I."/>
            <person name="Eun M.-Y."/>
            <person name="Yano M."/>
            <person name="Jiang J."/>
            <person name="Gojobori T."/>
        </authorList>
    </citation>
    <scope>NUCLEOTIDE SEQUENCE [LARGE SCALE GENOMIC DNA]</scope>
    <source>
        <strain>cv. Nipponbare</strain>
    </source>
</reference>
<reference key="2">
    <citation type="journal article" date="2005" name="Nature">
        <title>The map-based sequence of the rice genome.</title>
        <authorList>
            <consortium name="International rice genome sequencing project (IRGSP)"/>
        </authorList>
    </citation>
    <scope>NUCLEOTIDE SEQUENCE [LARGE SCALE GENOMIC DNA]</scope>
    <source>
        <strain>cv. Nipponbare</strain>
    </source>
</reference>
<reference key="3">
    <citation type="journal article" date="2008" name="Nucleic Acids Res.">
        <title>The rice annotation project database (RAP-DB): 2008 update.</title>
        <authorList>
            <consortium name="The rice annotation project (RAP)"/>
        </authorList>
    </citation>
    <scope>GENOME REANNOTATION</scope>
    <source>
        <strain>cv. Nipponbare</strain>
    </source>
</reference>
<reference key="4">
    <citation type="journal article" date="2013" name="Rice">
        <title>Improvement of the Oryza sativa Nipponbare reference genome using next generation sequence and optical map data.</title>
        <authorList>
            <person name="Kawahara Y."/>
            <person name="de la Bastide M."/>
            <person name="Hamilton J.P."/>
            <person name="Kanamori H."/>
            <person name="McCombie W.R."/>
            <person name="Ouyang S."/>
            <person name="Schwartz D.C."/>
            <person name="Tanaka T."/>
            <person name="Wu J."/>
            <person name="Zhou S."/>
            <person name="Childs K.L."/>
            <person name="Davidson R.M."/>
            <person name="Lin H."/>
            <person name="Quesada-Ocampo L."/>
            <person name="Vaillancourt B."/>
            <person name="Sakai H."/>
            <person name="Lee S.S."/>
            <person name="Kim J."/>
            <person name="Numa H."/>
            <person name="Itoh T."/>
            <person name="Buell C.R."/>
            <person name="Matsumoto T."/>
        </authorList>
    </citation>
    <scope>GENOME REANNOTATION</scope>
    <source>
        <strain>cv. Nipponbare</strain>
    </source>
</reference>
<reference key="5">
    <citation type="journal article" date="2005" name="PLoS Biol.">
        <title>The genomes of Oryza sativa: a history of duplications.</title>
        <authorList>
            <person name="Yu J."/>
            <person name="Wang J."/>
            <person name="Lin W."/>
            <person name="Li S."/>
            <person name="Li H."/>
            <person name="Zhou J."/>
            <person name="Ni P."/>
            <person name="Dong W."/>
            <person name="Hu S."/>
            <person name="Zeng C."/>
            <person name="Zhang J."/>
            <person name="Zhang Y."/>
            <person name="Li R."/>
            <person name="Xu Z."/>
            <person name="Li S."/>
            <person name="Li X."/>
            <person name="Zheng H."/>
            <person name="Cong L."/>
            <person name="Lin L."/>
            <person name="Yin J."/>
            <person name="Geng J."/>
            <person name="Li G."/>
            <person name="Shi J."/>
            <person name="Liu J."/>
            <person name="Lv H."/>
            <person name="Li J."/>
            <person name="Wang J."/>
            <person name="Deng Y."/>
            <person name="Ran L."/>
            <person name="Shi X."/>
            <person name="Wang X."/>
            <person name="Wu Q."/>
            <person name="Li C."/>
            <person name="Ren X."/>
            <person name="Wang J."/>
            <person name="Wang X."/>
            <person name="Li D."/>
            <person name="Liu D."/>
            <person name="Zhang X."/>
            <person name="Ji Z."/>
            <person name="Zhao W."/>
            <person name="Sun Y."/>
            <person name="Zhang Z."/>
            <person name="Bao J."/>
            <person name="Han Y."/>
            <person name="Dong L."/>
            <person name="Ji J."/>
            <person name="Chen P."/>
            <person name="Wu S."/>
            <person name="Liu J."/>
            <person name="Xiao Y."/>
            <person name="Bu D."/>
            <person name="Tan J."/>
            <person name="Yang L."/>
            <person name="Ye C."/>
            <person name="Zhang J."/>
            <person name="Xu J."/>
            <person name="Zhou Y."/>
            <person name="Yu Y."/>
            <person name="Zhang B."/>
            <person name="Zhuang S."/>
            <person name="Wei H."/>
            <person name="Liu B."/>
            <person name="Lei M."/>
            <person name="Yu H."/>
            <person name="Li Y."/>
            <person name="Xu H."/>
            <person name="Wei S."/>
            <person name="He X."/>
            <person name="Fang L."/>
            <person name="Zhang Z."/>
            <person name="Zhang Y."/>
            <person name="Huang X."/>
            <person name="Su Z."/>
            <person name="Tong W."/>
            <person name="Li J."/>
            <person name="Tong Z."/>
            <person name="Li S."/>
            <person name="Ye J."/>
            <person name="Wang L."/>
            <person name="Fang L."/>
            <person name="Lei T."/>
            <person name="Chen C.-S."/>
            <person name="Chen H.-C."/>
            <person name="Xu Z."/>
            <person name="Li H."/>
            <person name="Huang H."/>
            <person name="Zhang F."/>
            <person name="Xu H."/>
            <person name="Li N."/>
            <person name="Zhao C."/>
            <person name="Li S."/>
            <person name="Dong L."/>
            <person name="Huang Y."/>
            <person name="Li L."/>
            <person name="Xi Y."/>
            <person name="Qi Q."/>
            <person name="Li W."/>
            <person name="Zhang B."/>
            <person name="Hu W."/>
            <person name="Zhang Y."/>
            <person name="Tian X."/>
            <person name="Jiao Y."/>
            <person name="Liang X."/>
            <person name="Jin J."/>
            <person name="Gao L."/>
            <person name="Zheng W."/>
            <person name="Hao B."/>
            <person name="Liu S.-M."/>
            <person name="Wang W."/>
            <person name="Yuan L."/>
            <person name="Cao M."/>
            <person name="McDermott J."/>
            <person name="Samudrala R."/>
            <person name="Wang J."/>
            <person name="Wong G.K.-S."/>
            <person name="Yang H."/>
        </authorList>
    </citation>
    <scope>NUCLEOTIDE SEQUENCE [LARGE SCALE GENOMIC DNA]</scope>
    <source>
        <strain>cv. Nipponbare</strain>
    </source>
</reference>
<reference key="6">
    <citation type="journal article" date="2003" name="Science">
        <title>Collection, mapping, and annotation of over 28,000 cDNA clones from japonica rice.</title>
        <authorList>
            <consortium name="The rice full-length cDNA consortium"/>
        </authorList>
    </citation>
    <scope>NUCLEOTIDE SEQUENCE [LARGE SCALE MRNA]</scope>
    <source>
        <strain>cv. Nipponbare</strain>
    </source>
</reference>
<protein>
    <recommendedName>
        <fullName>Protein MOR1</fullName>
    </recommendedName>
    <alternativeName>
        <fullName>Protein GEM1</fullName>
    </alternativeName>
    <alternativeName>
        <fullName>Protein MICROTUBULE ORGANIZATION 1</fullName>
    </alternativeName>
</protein>
<sequence length="1997" mass="220408">MSTEDEKLLKEAKKLPWDERLQHKNWKVRNDANIDLAALCDSITDPKDARLREFGPLFKKTVADSNAPVQEKALDALLAFQRAADADASRYAKEVCDAIVAKCLTGRPKTVEKAQAAFLLWVELEAAEVFLESMEKAVKNKVAKAVVPAIDVMFQALSEFGAKVVPPKKILKMLPELFDHPDQNVRASSKGLTLELCRWIGKEPVKAILFEKMRDTMKKELEAELANVSGIAKPTRKIRSEQEKELEEEVVPEAAGTNNSEEAVPEAPMEIDEYDLVDPVDILTPLEKSGFWDGVKATKWSERRDAVAELTKLASTKKIAPGDFHEICRTLKKLITDVNLAVSVEATQAIGNLAKGLRTHFSGNSRVLLPVLLEKLKEKKPTMTEALSQTLQAMHKSGCITLLDVIEDVRVAVKNKVPLVRSLTLNWVAFCIETSNKATVLKLHKEYVPICMECLNDGTPEVRDASFSVLTAIAKMVGMKPLERSLEKLDDVRKKKLSDMIGSASDTTSGTVAASNTGVGTSAREVMDSSSMRRSAASMLSGKKPVQAVPATKKSGPAKSATAKKTDGGPQSKASAAPVIEDVEPSEMSLEEIEEKLSSVVKSETISQLKSTVWKERLEAISMLKQEVESLTELDKSAELLVRLLCAVPGWSEKNVQVQQQVIEVSTYIASTVNRFPKRCVVLCLLGISERVADIKTRGHAMKCLTAFCEAVGPGFVFERLYKIMKEHKNPKVLSEGILWMVSAVEDFGISNLKLKDTIDFCKDIGLQSSAAATRNATIKLIGVLHKFVGPDIKGFLSDVKPALLSTLDAEYEKNPFEGTASAPKRTVRAADAVSSASSGTSDGLPREDISAKITPTLLKNLGSPDWKLRLESIDAVSKIVEEAHKRIQPTGTVELFTALRARLYDSNKNLVMATLSTIGGLASAMGPAVEKSSKGILADVLKCLGDNKKHMRECTLTALDLWVAAAQLDKMVPYITVTLGDQKTGSEGRKDLFDWLSKHASNMSDPSEALPLLKPSASSLMDKSSEVRKAAESFMNEILKICGQDVVAKNLKDLPSPTLAIVAERLKLSTVHEGFSDSVKMVTTSMSLPSKAGSKNNKHGPNDRGSNVSKAVSQRGIPARSSVTMISSQDSIQSQALFNIKDSNKEERERRVLVRKFKFEEPRREQIDELKIELFRHFREDVSLRLWNSDFKRQIDGIELLQKALPSSRKEVIELLDILLRWFVLRFCESNTTCLLKVLDFLPELFDVLKDQSYMLTEAEAAIFLPCLMEKSGHNIEKVREKMGELIKQMVNIYSLPKLLPYILEGLRSKNNRTRIECVDIIGYFMDHHGTEVSGLLKNLPSVAALTAERDGEIRKAALNTLATAYKNLGDDVWRYVGKLSDAQRSMLDDRFKWKAREMDKRREGRPGDARAALRRSVRENGSDIAEQSGEAVSRSMAGSMISRENFGYSDAHMVPRQMATATPGPADWREALDIVALGLPEQSVEGMKVICHELTQAVDPESSVLDDLIKEADRLVSCLAVMVPKTFNFSLSGASSRSCKYVLNTLMQTFQIKRLAHAVKEGTLDNLITELLLWLLDERVPLMDDGSQLLKALNVLMLKILDNAERTSSFVVLINLLRPLDPSRWPSPTPPESLAVKNQKFSDLVVKCLIKLTKVLQSTIYEVDLDRILQSIHIYLQELGMEEIRRRAGADDKPLRMVKTVLHELVKLRGTAIKGHLSMVPIDAEPQPIILAYIDLNLQTLAAARMLTPSGTMGQTHWGDAGSNNPNPSTHSTDAQLKQELAAVFKKIGDKQTCTIGLYELYRITQLYPKVDIFAQLQNASEAFRTYIRDGLAQVEKNAAAGRTPSSLPLSTPPPIAPIPSPKFAPSPVHTKSINNKTDCNEDDAGGDTHPFRGQGEIDNRLQTTNLQTDRYQSSGTLDALRERMKSIQAAAVGANFDGVQARPLPSMNGNTLHGGTRLDADPQTQNIIPPMDERALSGLQARMERLKSGSMEPL</sequence>
<accession>Q5N749</accession>
<accession>A0A0P0V9P1</accession>
<organism>
    <name type="scientific">Oryza sativa subsp. japonica</name>
    <name type="common">Rice</name>
    <dbReference type="NCBI Taxonomy" id="39947"/>
    <lineage>
        <taxon>Eukaryota</taxon>
        <taxon>Viridiplantae</taxon>
        <taxon>Streptophyta</taxon>
        <taxon>Embryophyta</taxon>
        <taxon>Tracheophyta</taxon>
        <taxon>Spermatophyta</taxon>
        <taxon>Magnoliopsida</taxon>
        <taxon>Liliopsida</taxon>
        <taxon>Poales</taxon>
        <taxon>Poaceae</taxon>
        <taxon>BOP clade</taxon>
        <taxon>Oryzoideae</taxon>
        <taxon>Oryzeae</taxon>
        <taxon>Oryzinae</taxon>
        <taxon>Oryza</taxon>
        <taxon>Oryza sativa</taxon>
    </lineage>
</organism>
<gene>
    <name type="primary">MOR1</name>
    <name type="ordered locus">Os01g0816400</name>
    <name type="ordered locus">LOC_Os01g60040</name>
    <name type="ORF">B1148D12.6-1</name>
    <name type="ORF">OsJ_03864</name>
    <name type="ORF">OSJNBa0085D07.49-1</name>
</gene>
<dbReference type="EMBL" id="AP003411">
    <property type="protein sequence ID" value="BAD82281.1"/>
    <property type="molecule type" value="Genomic_DNA"/>
</dbReference>
<dbReference type="EMBL" id="AP004331">
    <property type="protein sequence ID" value="BAD82707.1"/>
    <property type="molecule type" value="Genomic_DNA"/>
</dbReference>
<dbReference type="EMBL" id="AP008207">
    <property type="protein sequence ID" value="BAF06532.1"/>
    <property type="molecule type" value="Genomic_DNA"/>
</dbReference>
<dbReference type="EMBL" id="AP014957">
    <property type="protein sequence ID" value="BAS74923.1"/>
    <property type="molecule type" value="Genomic_DNA"/>
</dbReference>
<dbReference type="EMBL" id="CM000138">
    <property type="protein sequence ID" value="EEE55578.1"/>
    <property type="molecule type" value="Genomic_DNA"/>
</dbReference>
<dbReference type="EMBL" id="AK121331">
    <property type="status" value="NOT_ANNOTATED_CDS"/>
    <property type="molecule type" value="mRNA"/>
</dbReference>
<dbReference type="RefSeq" id="XP_015616781.1">
    <property type="nucleotide sequence ID" value="XM_015761295.1"/>
</dbReference>
<dbReference type="FunCoup" id="Q5N749">
    <property type="interactions" value="2176"/>
</dbReference>
<dbReference type="STRING" id="39947.Q5N749"/>
<dbReference type="iPTMnet" id="Q5N749"/>
<dbReference type="PaxDb" id="39947-Q5N749"/>
<dbReference type="EnsemblPlants" id="Os01t0816400-02">
    <property type="protein sequence ID" value="Os01t0816400-02"/>
    <property type="gene ID" value="Os01g0816400"/>
</dbReference>
<dbReference type="Gramene" id="Os01t0816400-02">
    <property type="protein sequence ID" value="Os01t0816400-02"/>
    <property type="gene ID" value="Os01g0816400"/>
</dbReference>
<dbReference type="KEGG" id="dosa:Os01g0816400"/>
<dbReference type="eggNOG" id="KOG1820">
    <property type="taxonomic scope" value="Eukaryota"/>
</dbReference>
<dbReference type="HOGENOM" id="CLU_000539_1_0_1"/>
<dbReference type="InParanoid" id="Q5N749"/>
<dbReference type="OMA" id="NWKERKE"/>
<dbReference type="OrthoDB" id="205662at2759"/>
<dbReference type="Proteomes" id="UP000000763">
    <property type="component" value="Chromosome 1"/>
</dbReference>
<dbReference type="Proteomes" id="UP000007752">
    <property type="component" value="Chromosome 1"/>
</dbReference>
<dbReference type="Proteomes" id="UP000059680">
    <property type="component" value="Chromosome 1"/>
</dbReference>
<dbReference type="ExpressionAtlas" id="Q5N749">
    <property type="expression patterns" value="baseline and differential"/>
</dbReference>
<dbReference type="GO" id="GO:0005737">
    <property type="term" value="C:cytoplasm"/>
    <property type="evidence" value="ECO:0007669"/>
    <property type="project" value="UniProtKB-KW"/>
</dbReference>
<dbReference type="GO" id="GO:0000776">
    <property type="term" value="C:kinetochore"/>
    <property type="evidence" value="ECO:0000318"/>
    <property type="project" value="GO_Central"/>
</dbReference>
<dbReference type="GO" id="GO:0005874">
    <property type="term" value="C:microtubule"/>
    <property type="evidence" value="ECO:0007669"/>
    <property type="project" value="UniProtKB-KW"/>
</dbReference>
<dbReference type="GO" id="GO:0000922">
    <property type="term" value="C:spindle pole"/>
    <property type="evidence" value="ECO:0000318"/>
    <property type="project" value="GO_Central"/>
</dbReference>
<dbReference type="GO" id="GO:0008017">
    <property type="term" value="F:microtubule binding"/>
    <property type="evidence" value="ECO:0000318"/>
    <property type="project" value="GO_Central"/>
</dbReference>
<dbReference type="GO" id="GO:0061863">
    <property type="term" value="F:microtubule plus end polymerase"/>
    <property type="evidence" value="ECO:0000318"/>
    <property type="project" value="GO_Central"/>
</dbReference>
<dbReference type="GO" id="GO:0051010">
    <property type="term" value="F:microtubule plus-end binding"/>
    <property type="evidence" value="ECO:0007669"/>
    <property type="project" value="InterPro"/>
</dbReference>
<dbReference type="GO" id="GO:0030951">
    <property type="term" value="P:establishment or maintenance of microtubule cytoskeleton polarity"/>
    <property type="evidence" value="ECO:0000318"/>
    <property type="project" value="GO_Central"/>
</dbReference>
<dbReference type="GO" id="GO:0046785">
    <property type="term" value="P:microtubule polymerization"/>
    <property type="evidence" value="ECO:0000318"/>
    <property type="project" value="GO_Central"/>
</dbReference>
<dbReference type="GO" id="GO:0007052">
    <property type="term" value="P:mitotic spindle organization"/>
    <property type="evidence" value="ECO:0000318"/>
    <property type="project" value="GO_Central"/>
</dbReference>
<dbReference type="FunFam" id="1.25.10.10:FF:000019">
    <property type="entry name" value="Cytoskeleton-associated protein 5"/>
    <property type="match status" value="1"/>
</dbReference>
<dbReference type="FunFam" id="1.25.10.10:FF:000121">
    <property type="entry name" value="Protein MOR1"/>
    <property type="match status" value="1"/>
</dbReference>
<dbReference type="FunFam" id="1.25.10.10:FF:000137">
    <property type="entry name" value="Protein MOR1"/>
    <property type="match status" value="1"/>
</dbReference>
<dbReference type="FunFam" id="1.25.10.10:FF:000155">
    <property type="entry name" value="Protein MOR1"/>
    <property type="match status" value="1"/>
</dbReference>
<dbReference type="FunFam" id="1.25.10.10:FF:000165">
    <property type="entry name" value="Protein MOR1"/>
    <property type="match status" value="1"/>
</dbReference>
<dbReference type="Gene3D" id="1.25.10.10">
    <property type="entry name" value="Leucine-rich Repeat Variant"/>
    <property type="match status" value="5"/>
</dbReference>
<dbReference type="InterPro" id="IPR011989">
    <property type="entry name" value="ARM-like"/>
</dbReference>
<dbReference type="InterPro" id="IPR016024">
    <property type="entry name" value="ARM-type_fold"/>
</dbReference>
<dbReference type="InterPro" id="IPR024395">
    <property type="entry name" value="CLASP_N_dom"/>
</dbReference>
<dbReference type="InterPro" id="IPR021133">
    <property type="entry name" value="HEAT_type_2"/>
</dbReference>
<dbReference type="InterPro" id="IPR034085">
    <property type="entry name" value="TOG"/>
</dbReference>
<dbReference type="InterPro" id="IPR045110">
    <property type="entry name" value="XMAP215"/>
</dbReference>
<dbReference type="InterPro" id="IPR048491">
    <property type="entry name" value="XMAP215_CLASP_TOG"/>
</dbReference>
<dbReference type="PANTHER" id="PTHR12609">
    <property type="entry name" value="MICROTUBULE ASSOCIATED PROTEIN XMAP215"/>
    <property type="match status" value="1"/>
</dbReference>
<dbReference type="Pfam" id="PF12348">
    <property type="entry name" value="CLASP_N"/>
    <property type="match status" value="1"/>
</dbReference>
<dbReference type="Pfam" id="PF21041">
    <property type="entry name" value="XMAP215_CLASP_TOG"/>
    <property type="match status" value="3"/>
</dbReference>
<dbReference type="SMART" id="SM01349">
    <property type="entry name" value="TOG"/>
    <property type="match status" value="5"/>
</dbReference>
<dbReference type="SUPFAM" id="SSF48371">
    <property type="entry name" value="ARM repeat"/>
    <property type="match status" value="2"/>
</dbReference>
<dbReference type="PROSITE" id="PS50077">
    <property type="entry name" value="HEAT_REPEAT"/>
    <property type="match status" value="1"/>
</dbReference>
<keyword id="KW-0963">Cytoplasm</keyword>
<keyword id="KW-0206">Cytoskeleton</keyword>
<keyword id="KW-0493">Microtubule</keyword>
<keyword id="KW-1185">Reference proteome</keyword>
<keyword id="KW-0677">Repeat</keyword>
<comment type="function">
    <text evidence="1">Microtubule-associated protein that is essential for cortical microtubules organization and function.</text>
</comment>
<comment type="subcellular location">
    <subcellularLocation>
        <location evidence="2">Cytoplasm</location>
        <location evidence="2">Cytoskeleton</location>
    </subcellularLocation>
    <text evidence="2">Associated to microtubules.</text>
</comment>
<comment type="similarity">
    <text evidence="4">Belongs to the TOG/XMAP215 family.</text>
</comment>
<comment type="sequence caution" evidence="4">
    <conflict type="miscellaneous discrepancy">
        <sequence resource="EMBL" id="AK121331"/>
    </conflict>
    <text>Sequencing errors.</text>
</comment>
<proteinExistence type="evidence at transcript level"/>